<evidence type="ECO:0000255" key="1">
    <source>
        <dbReference type="HAMAP-Rule" id="MF_00902"/>
    </source>
</evidence>
<reference key="1">
    <citation type="journal article" date="1995" name="DNA Res.">
        <title>Sequence analysis of the genome of the unicellular cyanobacterium Synechocystis sp. strain PCC6803. I. Sequence features in the 1 Mb region from map positions 64% to 92% of the genome.</title>
        <authorList>
            <person name="Kaneko T."/>
            <person name="Tanaka A."/>
            <person name="Sato S."/>
            <person name="Kotani H."/>
            <person name="Sazuka T."/>
            <person name="Miyajima N."/>
            <person name="Sugiura M."/>
            <person name="Tabata S."/>
        </authorList>
    </citation>
    <scope>NUCLEOTIDE SEQUENCE [LARGE SCALE GENOMIC DNA]</scope>
    <source>
        <strain>ATCC 27184 / PCC 6803 / N-1</strain>
    </source>
</reference>
<reference key="2">
    <citation type="journal article" date="1996" name="DNA Res.">
        <title>Sequence analysis of the genome of the unicellular cyanobacterium Synechocystis sp. strain PCC6803. II. Sequence determination of the entire genome and assignment of potential protein-coding regions.</title>
        <authorList>
            <person name="Kaneko T."/>
            <person name="Sato S."/>
            <person name="Kotani H."/>
            <person name="Tanaka A."/>
            <person name="Asamizu E."/>
            <person name="Nakamura Y."/>
            <person name="Miyajima N."/>
            <person name="Hirosawa M."/>
            <person name="Sugiura M."/>
            <person name="Sasamoto S."/>
            <person name="Kimura T."/>
            <person name="Hosouchi T."/>
            <person name="Matsuno A."/>
            <person name="Muraki A."/>
            <person name="Nakazaki N."/>
            <person name="Naruo K."/>
            <person name="Okumura S."/>
            <person name="Shimpo S."/>
            <person name="Takeuchi C."/>
            <person name="Wada T."/>
            <person name="Watanabe A."/>
            <person name="Yamada M."/>
            <person name="Yasuda M."/>
            <person name="Tabata S."/>
        </authorList>
    </citation>
    <scope>NUCLEOTIDE SEQUENCE [LARGE SCALE GENOMIC DNA]</scope>
    <source>
        <strain>ATCC 27184 / PCC 6803 / Kazusa</strain>
    </source>
</reference>
<sequence>MSTQLDNITSAETAPDYLDEVPDDVEMSLFDHLDELRTRIFLSLGAVLVGVVACFIFVKPLVQWLQVPAGTVKFLQLSPGEFFFVSVKVAGYSGILVMSPFILYQIIQFVLPGLTRRERRLLGPVVLGSSVLFFAGLGFAYYALIPAALKFFVSYGADVVEQLWSIDKYFEFVLLLMFSTGLAFQIPIIQVVLGFLGIVSSEQMLKGWRFVILGAMVLGAILTPSTDPLTQSLLAGAVLGLYFGGIGCVRLLGK</sequence>
<name>TATC_SYNY3</name>
<proteinExistence type="inferred from homology"/>
<comment type="function">
    <text evidence="1">Part of the twin-arginine translocation (Tat) system that transports large folded proteins containing a characteristic twin-arginine motif in their signal peptide across membranes.</text>
</comment>
<comment type="subunit">
    <text evidence="1">Forms a complex with TatA.</text>
</comment>
<comment type="subcellular location">
    <subcellularLocation>
        <location evidence="1">Cell inner membrane</location>
        <topology evidence="1">Multi-pass membrane protein</topology>
    </subcellularLocation>
</comment>
<comment type="similarity">
    <text evidence="1">Belongs to the TatC family.</text>
</comment>
<gene>
    <name evidence="1" type="primary">tatC</name>
    <name type="ordered locus">sll0194</name>
</gene>
<organism>
    <name type="scientific">Synechocystis sp. (strain ATCC 27184 / PCC 6803 / Kazusa)</name>
    <dbReference type="NCBI Taxonomy" id="1111708"/>
    <lineage>
        <taxon>Bacteria</taxon>
        <taxon>Bacillati</taxon>
        <taxon>Cyanobacteriota</taxon>
        <taxon>Cyanophyceae</taxon>
        <taxon>Synechococcales</taxon>
        <taxon>Merismopediaceae</taxon>
        <taxon>Synechocystis</taxon>
    </lineage>
</organism>
<feature type="chain" id="PRO_0000098097" description="Sec-independent protein translocase protein TatC">
    <location>
        <begin position="1"/>
        <end position="254"/>
    </location>
</feature>
<feature type="transmembrane region" description="Helical" evidence="1">
    <location>
        <begin position="40"/>
        <end position="60"/>
    </location>
</feature>
<feature type="transmembrane region" description="Helical" evidence="1">
    <location>
        <begin position="82"/>
        <end position="104"/>
    </location>
</feature>
<feature type="transmembrane region" description="Helical" evidence="1">
    <location>
        <begin position="125"/>
        <end position="145"/>
    </location>
</feature>
<feature type="transmembrane region" description="Helical" evidence="1">
    <location>
        <begin position="172"/>
        <end position="192"/>
    </location>
</feature>
<feature type="transmembrane region" description="Helical" evidence="1">
    <location>
        <begin position="210"/>
        <end position="230"/>
    </location>
</feature>
<feature type="transmembrane region" description="Helical" evidence="1">
    <location>
        <begin position="233"/>
        <end position="253"/>
    </location>
</feature>
<protein>
    <recommendedName>
        <fullName evidence="1">Sec-independent protein translocase protein TatC</fullName>
    </recommendedName>
</protein>
<accession>P54086</accession>
<keyword id="KW-0997">Cell inner membrane</keyword>
<keyword id="KW-1003">Cell membrane</keyword>
<keyword id="KW-0472">Membrane</keyword>
<keyword id="KW-0653">Protein transport</keyword>
<keyword id="KW-1185">Reference proteome</keyword>
<keyword id="KW-0811">Translocation</keyword>
<keyword id="KW-0812">Transmembrane</keyword>
<keyword id="KW-1133">Transmembrane helix</keyword>
<keyword id="KW-0813">Transport</keyword>
<dbReference type="EMBL" id="BA000022">
    <property type="protein sequence ID" value="BAA10232.1"/>
    <property type="molecule type" value="Genomic_DNA"/>
</dbReference>
<dbReference type="PIR" id="S76380">
    <property type="entry name" value="S76380"/>
</dbReference>
<dbReference type="SMR" id="P54086"/>
<dbReference type="FunCoup" id="P54086">
    <property type="interactions" value="464"/>
</dbReference>
<dbReference type="IntAct" id="P54086">
    <property type="interactions" value="5"/>
</dbReference>
<dbReference type="STRING" id="1148.gene:10499731"/>
<dbReference type="PaxDb" id="1148-1001604"/>
<dbReference type="EnsemblBacteria" id="BAA10232">
    <property type="protein sequence ID" value="BAA10232"/>
    <property type="gene ID" value="BAA10232"/>
</dbReference>
<dbReference type="KEGG" id="syn:sll0194"/>
<dbReference type="eggNOG" id="COG0805">
    <property type="taxonomic scope" value="Bacteria"/>
</dbReference>
<dbReference type="InParanoid" id="P54086"/>
<dbReference type="PhylomeDB" id="P54086"/>
<dbReference type="Proteomes" id="UP000001425">
    <property type="component" value="Chromosome"/>
</dbReference>
<dbReference type="GO" id="GO:0033281">
    <property type="term" value="C:TAT protein transport complex"/>
    <property type="evidence" value="ECO:0000318"/>
    <property type="project" value="GO_Central"/>
</dbReference>
<dbReference type="GO" id="GO:0009977">
    <property type="term" value="F:proton motive force dependent protein transmembrane transporter activity"/>
    <property type="evidence" value="ECO:0000318"/>
    <property type="project" value="GO_Central"/>
</dbReference>
<dbReference type="GO" id="GO:0065002">
    <property type="term" value="P:intracellular protein transmembrane transport"/>
    <property type="evidence" value="ECO:0000318"/>
    <property type="project" value="GO_Central"/>
</dbReference>
<dbReference type="GO" id="GO:0043953">
    <property type="term" value="P:protein transport by the Tat complex"/>
    <property type="evidence" value="ECO:0000318"/>
    <property type="project" value="GO_Central"/>
</dbReference>
<dbReference type="HAMAP" id="MF_00902">
    <property type="entry name" value="TatC"/>
    <property type="match status" value="1"/>
</dbReference>
<dbReference type="InterPro" id="IPR019820">
    <property type="entry name" value="Sec-indep_translocase_CS"/>
</dbReference>
<dbReference type="InterPro" id="IPR002033">
    <property type="entry name" value="TatC"/>
</dbReference>
<dbReference type="NCBIfam" id="TIGR00945">
    <property type="entry name" value="tatC"/>
    <property type="match status" value="1"/>
</dbReference>
<dbReference type="PANTHER" id="PTHR30371">
    <property type="entry name" value="SEC-INDEPENDENT PROTEIN TRANSLOCASE PROTEIN TATC"/>
    <property type="match status" value="1"/>
</dbReference>
<dbReference type="PANTHER" id="PTHR30371:SF0">
    <property type="entry name" value="SEC-INDEPENDENT PROTEIN TRANSLOCASE PROTEIN TATC, CHLOROPLASTIC-RELATED"/>
    <property type="match status" value="1"/>
</dbReference>
<dbReference type="Pfam" id="PF00902">
    <property type="entry name" value="TatC"/>
    <property type="match status" value="1"/>
</dbReference>
<dbReference type="PRINTS" id="PR01840">
    <property type="entry name" value="TATCFAMILY"/>
</dbReference>
<dbReference type="PROSITE" id="PS01218">
    <property type="entry name" value="TATC"/>
    <property type="match status" value="1"/>
</dbReference>